<proteinExistence type="evidence at protein level"/>
<protein>
    <recommendedName>
        <fullName evidence="1">Serine--tRNA ligase</fullName>
        <ecNumber evidence="1">6.1.1.11</ecNumber>
    </recommendedName>
    <alternativeName>
        <fullName evidence="1">Seryl-tRNA synthetase</fullName>
        <shortName evidence="1">SerRS</shortName>
    </alternativeName>
    <alternativeName>
        <fullName evidence="1">Seryl-tRNA(Ser/Sec) synthetase</fullName>
    </alternativeName>
</protein>
<feature type="chain" id="PRO_0000122146" description="Serine--tRNA ligase">
    <location>
        <begin position="1"/>
        <end position="421"/>
    </location>
</feature>
<feature type="binding site" evidence="1">
    <location>
        <begin position="225"/>
        <end position="227"/>
    </location>
    <ligand>
        <name>L-serine</name>
        <dbReference type="ChEBI" id="CHEBI:33384"/>
    </ligand>
</feature>
<feature type="binding site" evidence="1">
    <location>
        <begin position="256"/>
        <end position="258"/>
    </location>
    <ligand>
        <name>ATP</name>
        <dbReference type="ChEBI" id="CHEBI:30616"/>
    </ligand>
</feature>
<feature type="binding site" evidence="1">
    <location>
        <position position="272"/>
    </location>
    <ligand>
        <name>ATP</name>
        <dbReference type="ChEBI" id="CHEBI:30616"/>
    </ligand>
</feature>
<feature type="binding site" evidence="1">
    <location>
        <position position="279"/>
    </location>
    <ligand>
        <name>L-serine</name>
        <dbReference type="ChEBI" id="CHEBI:33384"/>
    </ligand>
</feature>
<feature type="binding site" evidence="1">
    <location>
        <begin position="345"/>
        <end position="348"/>
    </location>
    <ligand>
        <name>ATP</name>
        <dbReference type="ChEBI" id="CHEBI:30616"/>
    </ligand>
</feature>
<feature type="binding site" evidence="1">
    <location>
        <position position="380"/>
    </location>
    <ligand>
        <name>L-serine</name>
        <dbReference type="ChEBI" id="CHEBI:33384"/>
    </ligand>
</feature>
<feature type="helix" evidence="2">
    <location>
        <begin position="94"/>
        <end position="98"/>
    </location>
</feature>
<feature type="helix" evidence="2">
    <location>
        <begin position="114"/>
        <end position="116"/>
    </location>
</feature>
<feature type="strand" evidence="2">
    <location>
        <begin position="118"/>
        <end position="124"/>
    </location>
</feature>
<feature type="helix" evidence="2">
    <location>
        <begin position="136"/>
        <end position="143"/>
    </location>
</feature>
<feature type="helix" evidence="2">
    <location>
        <begin position="150"/>
        <end position="154"/>
    </location>
</feature>
<feature type="helix" evidence="2">
    <location>
        <begin position="163"/>
        <end position="182"/>
    </location>
</feature>
<feature type="strand" evidence="2">
    <location>
        <begin position="186"/>
        <end position="189"/>
    </location>
</feature>
<feature type="strand" evidence="2">
    <location>
        <begin position="192"/>
        <end position="195"/>
    </location>
</feature>
<feature type="helix" evidence="2">
    <location>
        <begin position="196"/>
        <end position="202"/>
    </location>
</feature>
<feature type="turn" evidence="2">
    <location>
        <begin position="205"/>
        <end position="208"/>
    </location>
</feature>
<feature type="helix" evidence="2">
    <location>
        <begin position="209"/>
        <end position="211"/>
    </location>
</feature>
<feature type="turn" evidence="2">
    <location>
        <begin position="216"/>
        <end position="219"/>
    </location>
</feature>
<feature type="strand" evidence="2">
    <location>
        <begin position="220"/>
        <end position="222"/>
    </location>
</feature>
<feature type="helix" evidence="2">
    <location>
        <begin position="227"/>
        <end position="232"/>
    </location>
</feature>
<feature type="turn" evidence="2">
    <location>
        <begin position="233"/>
        <end position="236"/>
    </location>
</feature>
<feature type="strand" evidence="2">
    <location>
        <begin position="238"/>
        <end position="240"/>
    </location>
</feature>
<feature type="helix" evidence="2">
    <location>
        <begin position="241"/>
        <end position="243"/>
    </location>
</feature>
<feature type="strand" evidence="2">
    <location>
        <begin position="245"/>
        <end position="255"/>
    </location>
</feature>
<feature type="strand" evidence="2">
    <location>
        <begin position="273"/>
        <end position="284"/>
    </location>
</feature>
<feature type="helix" evidence="2">
    <location>
        <begin position="288"/>
        <end position="308"/>
    </location>
</feature>
<feature type="strand" evidence="2">
    <location>
        <begin position="313"/>
        <end position="317"/>
    </location>
</feature>
<feature type="turn" evidence="2">
    <location>
        <begin position="320"/>
        <end position="322"/>
    </location>
</feature>
<feature type="strand" evidence="2">
    <location>
        <begin position="328"/>
        <end position="337"/>
    </location>
</feature>
<feature type="helix" evidence="2">
    <location>
        <begin position="338"/>
        <end position="340"/>
    </location>
</feature>
<feature type="strand" evidence="2">
    <location>
        <begin position="342"/>
        <end position="353"/>
    </location>
</feature>
<feature type="helix" evidence="2">
    <location>
        <begin position="355"/>
        <end position="360"/>
    </location>
</feature>
<feature type="strand" evidence="2">
    <location>
        <begin position="363"/>
        <end position="365"/>
    </location>
</feature>
<feature type="strand" evidence="2">
    <location>
        <begin position="371"/>
        <end position="373"/>
    </location>
</feature>
<feature type="strand" evidence="2">
    <location>
        <begin position="375"/>
        <end position="384"/>
    </location>
</feature>
<feature type="helix" evidence="2">
    <location>
        <begin position="386"/>
        <end position="395"/>
    </location>
</feature>
<feature type="helix" evidence="2">
    <location>
        <begin position="406"/>
        <end position="408"/>
    </location>
</feature>
<feature type="helix" evidence="2">
    <location>
        <begin position="409"/>
        <end position="412"/>
    </location>
</feature>
<feature type="strand" evidence="2">
    <location>
        <begin position="413"/>
        <end position="417"/>
    </location>
</feature>
<dbReference type="EC" id="6.1.1.11" evidence="1"/>
<dbReference type="EMBL" id="AP008226">
    <property type="protein sequence ID" value="BAD70698.1"/>
    <property type="molecule type" value="Genomic_DNA"/>
</dbReference>
<dbReference type="RefSeq" id="WP_011228260.1">
    <property type="nucleotide sequence ID" value="NC_006461.1"/>
</dbReference>
<dbReference type="RefSeq" id="YP_144141.1">
    <property type="nucleotide sequence ID" value="NC_006461.1"/>
</dbReference>
<dbReference type="PDB" id="3ERR">
    <property type="method" value="X-ray"/>
    <property type="resolution" value="2.27 A"/>
    <property type="chains" value="A/B=1-34, A/B=63-126, A/B=254-419"/>
</dbReference>
<dbReference type="PDB" id="8FCY">
    <property type="method" value="EM"/>
    <property type="resolution" value="3.40 A"/>
    <property type="chains" value="A=31-97"/>
</dbReference>
<dbReference type="PDB" id="8FD6">
    <property type="method" value="EM"/>
    <property type="resolution" value="2.90 A"/>
    <property type="chains" value="A=31-97"/>
</dbReference>
<dbReference type="PDB" id="8FDT">
    <property type="method" value="EM"/>
    <property type="resolution" value="3.20 A"/>
    <property type="chains" value="A=31-97"/>
</dbReference>
<dbReference type="PDB" id="8FDU">
    <property type="method" value="EM"/>
    <property type="resolution" value="3.30 A"/>
    <property type="chains" value="A=31-97"/>
</dbReference>
<dbReference type="PDBsum" id="3ERR"/>
<dbReference type="PDBsum" id="8FCY"/>
<dbReference type="PDBsum" id="8FD6"/>
<dbReference type="PDBsum" id="8FDT"/>
<dbReference type="PDBsum" id="8FDU"/>
<dbReference type="SMR" id="Q5SJX7"/>
<dbReference type="EnsemblBacteria" id="BAD70698">
    <property type="protein sequence ID" value="BAD70698"/>
    <property type="gene ID" value="BAD70698"/>
</dbReference>
<dbReference type="GeneID" id="3168248"/>
<dbReference type="KEGG" id="ttj:TTHA0875"/>
<dbReference type="PATRIC" id="fig|300852.9.peg.868"/>
<dbReference type="eggNOG" id="COG0172">
    <property type="taxonomic scope" value="Bacteria"/>
</dbReference>
<dbReference type="HOGENOM" id="CLU_023797_0_1_0"/>
<dbReference type="PhylomeDB" id="Q5SJX7"/>
<dbReference type="UniPathway" id="UPA00906">
    <property type="reaction ID" value="UER00895"/>
</dbReference>
<dbReference type="EvolutionaryTrace" id="Q5SJX7"/>
<dbReference type="Proteomes" id="UP000000532">
    <property type="component" value="Chromosome"/>
</dbReference>
<dbReference type="GO" id="GO:0005737">
    <property type="term" value="C:cytoplasm"/>
    <property type="evidence" value="ECO:0007669"/>
    <property type="project" value="UniProtKB-SubCell"/>
</dbReference>
<dbReference type="GO" id="GO:0005524">
    <property type="term" value="F:ATP binding"/>
    <property type="evidence" value="ECO:0007669"/>
    <property type="project" value="UniProtKB-UniRule"/>
</dbReference>
<dbReference type="GO" id="GO:0004828">
    <property type="term" value="F:serine-tRNA ligase activity"/>
    <property type="evidence" value="ECO:0007669"/>
    <property type="project" value="UniProtKB-UniRule"/>
</dbReference>
<dbReference type="GO" id="GO:0016260">
    <property type="term" value="P:selenocysteine biosynthetic process"/>
    <property type="evidence" value="ECO:0007669"/>
    <property type="project" value="UniProtKB-UniRule"/>
</dbReference>
<dbReference type="GO" id="GO:0006434">
    <property type="term" value="P:seryl-tRNA aminoacylation"/>
    <property type="evidence" value="ECO:0007669"/>
    <property type="project" value="UniProtKB-UniRule"/>
</dbReference>
<dbReference type="CDD" id="cd00770">
    <property type="entry name" value="SerRS_core"/>
    <property type="match status" value="1"/>
</dbReference>
<dbReference type="Gene3D" id="3.30.930.10">
    <property type="entry name" value="Bira Bifunctional Protein, Domain 2"/>
    <property type="match status" value="1"/>
</dbReference>
<dbReference type="Gene3D" id="1.10.287.40">
    <property type="entry name" value="Serine-tRNA synthetase, tRNA binding domain"/>
    <property type="match status" value="2"/>
</dbReference>
<dbReference type="HAMAP" id="MF_00176">
    <property type="entry name" value="Ser_tRNA_synth_type1"/>
    <property type="match status" value="1"/>
</dbReference>
<dbReference type="InterPro" id="IPR002314">
    <property type="entry name" value="aa-tRNA-synt_IIb"/>
</dbReference>
<dbReference type="InterPro" id="IPR006195">
    <property type="entry name" value="aa-tRNA-synth_II"/>
</dbReference>
<dbReference type="InterPro" id="IPR045864">
    <property type="entry name" value="aa-tRNA-synth_II/BPL/LPL"/>
</dbReference>
<dbReference type="InterPro" id="IPR002317">
    <property type="entry name" value="Ser-tRNA-ligase_type_1"/>
</dbReference>
<dbReference type="InterPro" id="IPR015866">
    <property type="entry name" value="Ser-tRNA-synth_1_N"/>
</dbReference>
<dbReference type="InterPro" id="IPR042103">
    <property type="entry name" value="SerRS_1_N_sf"/>
</dbReference>
<dbReference type="InterPro" id="IPR033729">
    <property type="entry name" value="SerRS_core"/>
</dbReference>
<dbReference type="InterPro" id="IPR010978">
    <property type="entry name" value="tRNA-bd_arm"/>
</dbReference>
<dbReference type="NCBIfam" id="TIGR00414">
    <property type="entry name" value="serS"/>
    <property type="match status" value="1"/>
</dbReference>
<dbReference type="PANTHER" id="PTHR43697:SF1">
    <property type="entry name" value="SERINE--TRNA LIGASE"/>
    <property type="match status" value="1"/>
</dbReference>
<dbReference type="PANTHER" id="PTHR43697">
    <property type="entry name" value="SERYL-TRNA SYNTHETASE"/>
    <property type="match status" value="1"/>
</dbReference>
<dbReference type="Pfam" id="PF02403">
    <property type="entry name" value="Seryl_tRNA_N"/>
    <property type="match status" value="1"/>
</dbReference>
<dbReference type="Pfam" id="PF00587">
    <property type="entry name" value="tRNA-synt_2b"/>
    <property type="match status" value="1"/>
</dbReference>
<dbReference type="PIRSF" id="PIRSF001529">
    <property type="entry name" value="Ser-tRNA-synth_IIa"/>
    <property type="match status" value="1"/>
</dbReference>
<dbReference type="PRINTS" id="PR00981">
    <property type="entry name" value="TRNASYNTHSER"/>
</dbReference>
<dbReference type="SUPFAM" id="SSF55681">
    <property type="entry name" value="Class II aaRS and biotin synthetases"/>
    <property type="match status" value="1"/>
</dbReference>
<dbReference type="SUPFAM" id="SSF46589">
    <property type="entry name" value="tRNA-binding arm"/>
    <property type="match status" value="1"/>
</dbReference>
<dbReference type="PROSITE" id="PS50862">
    <property type="entry name" value="AA_TRNA_LIGASE_II"/>
    <property type="match status" value="1"/>
</dbReference>
<accession>Q5SJX7</accession>
<name>SYS_THET8</name>
<comment type="function">
    <text evidence="1">Catalyzes the attachment of serine to tRNA(Ser). Is also able to aminoacylate tRNA(Sec) with serine, to form the misacylated tRNA L-seryl-tRNA(Sec), which will be further converted into selenocysteinyl-tRNA(Sec).</text>
</comment>
<comment type="catalytic activity">
    <reaction evidence="1">
        <text>tRNA(Ser) + L-serine + ATP = L-seryl-tRNA(Ser) + AMP + diphosphate + H(+)</text>
        <dbReference type="Rhea" id="RHEA:12292"/>
        <dbReference type="Rhea" id="RHEA-COMP:9669"/>
        <dbReference type="Rhea" id="RHEA-COMP:9703"/>
        <dbReference type="ChEBI" id="CHEBI:15378"/>
        <dbReference type="ChEBI" id="CHEBI:30616"/>
        <dbReference type="ChEBI" id="CHEBI:33019"/>
        <dbReference type="ChEBI" id="CHEBI:33384"/>
        <dbReference type="ChEBI" id="CHEBI:78442"/>
        <dbReference type="ChEBI" id="CHEBI:78533"/>
        <dbReference type="ChEBI" id="CHEBI:456215"/>
        <dbReference type="EC" id="6.1.1.11"/>
    </reaction>
</comment>
<comment type="catalytic activity">
    <reaction evidence="1">
        <text>tRNA(Sec) + L-serine + ATP = L-seryl-tRNA(Sec) + AMP + diphosphate + H(+)</text>
        <dbReference type="Rhea" id="RHEA:42580"/>
        <dbReference type="Rhea" id="RHEA-COMP:9742"/>
        <dbReference type="Rhea" id="RHEA-COMP:10128"/>
        <dbReference type="ChEBI" id="CHEBI:15378"/>
        <dbReference type="ChEBI" id="CHEBI:30616"/>
        <dbReference type="ChEBI" id="CHEBI:33019"/>
        <dbReference type="ChEBI" id="CHEBI:33384"/>
        <dbReference type="ChEBI" id="CHEBI:78442"/>
        <dbReference type="ChEBI" id="CHEBI:78533"/>
        <dbReference type="ChEBI" id="CHEBI:456215"/>
        <dbReference type="EC" id="6.1.1.11"/>
    </reaction>
</comment>
<comment type="pathway">
    <text evidence="1">Aminoacyl-tRNA biosynthesis; selenocysteinyl-tRNA(Sec) biosynthesis; L-seryl-tRNA(Sec) from L-serine and tRNA(Sec): step 1/1.</text>
</comment>
<comment type="subunit">
    <text evidence="1">Homodimer. The tRNA molecule binds across the dimer.</text>
</comment>
<comment type="subcellular location">
    <subcellularLocation>
        <location evidence="1">Cytoplasm</location>
    </subcellularLocation>
</comment>
<comment type="domain">
    <text evidence="1">Consists of two distinct domains, a catalytic core and a N-terminal extension that is involved in tRNA binding.</text>
</comment>
<comment type="similarity">
    <text evidence="1">Belongs to the class-II aminoacyl-tRNA synthetase family. Type-1 seryl-tRNA synthetase subfamily.</text>
</comment>
<evidence type="ECO:0000255" key="1">
    <source>
        <dbReference type="HAMAP-Rule" id="MF_00176"/>
    </source>
</evidence>
<evidence type="ECO:0007829" key="2">
    <source>
        <dbReference type="PDB" id="3ERR"/>
    </source>
</evidence>
<reference key="1">
    <citation type="submission" date="2004-11" db="EMBL/GenBank/DDBJ databases">
        <title>Complete genome sequence of Thermus thermophilus HB8.</title>
        <authorList>
            <person name="Masui R."/>
            <person name="Kurokawa K."/>
            <person name="Nakagawa N."/>
            <person name="Tokunaga F."/>
            <person name="Koyama Y."/>
            <person name="Shibata T."/>
            <person name="Oshima T."/>
            <person name="Yokoyama S."/>
            <person name="Yasunaga T."/>
            <person name="Kuramitsu S."/>
        </authorList>
    </citation>
    <scope>NUCLEOTIDE SEQUENCE [LARGE SCALE GENOMIC DNA]</scope>
    <source>
        <strain>ATCC 27634 / DSM 579 / HB8</strain>
    </source>
</reference>
<sequence length="421" mass="47787">MVDLKRLRQEPEVFHRAIREKGVALDLEALLALDQEVQELKKRLQEVQTERNQVAKRVPKAPPEEKEALIARGRALGEEAKRLEEALREKEAQLEALLLQVPLPPWPGAPVGGEEANREIKRVGSPPEFSFPPLDHVALMEKNGWWEPRISQVSGSRSYALKGDLALYELALLRFAMDFMARRGFLPMTLPSYAREKAFLGTGHFPAYRDQVWAIAETDLYLTGTAEVVLNALHSGEILPYEALPLRYAGYAPAFRSEAGSFGKDVRGLMRVHQFHKVEQYVLTEASLEASDRAFQELLENAEEILRLLELPYRLVEVATGDMGPGKWRQVDVEVYLPSEGRYRETHSCSALLDWQARRANLRYRDPEGRVRYAYTLNNTALATPRILAMLLENHQLQDGRVRVPKALVPYMGKEVLEPCG</sequence>
<organism>
    <name type="scientific">Thermus thermophilus (strain ATCC 27634 / DSM 579 / HB8)</name>
    <dbReference type="NCBI Taxonomy" id="300852"/>
    <lineage>
        <taxon>Bacteria</taxon>
        <taxon>Thermotogati</taxon>
        <taxon>Deinococcota</taxon>
        <taxon>Deinococci</taxon>
        <taxon>Thermales</taxon>
        <taxon>Thermaceae</taxon>
        <taxon>Thermus</taxon>
    </lineage>
</organism>
<keyword id="KW-0002">3D-structure</keyword>
<keyword id="KW-0030">Aminoacyl-tRNA synthetase</keyword>
<keyword id="KW-0067">ATP-binding</keyword>
<keyword id="KW-0963">Cytoplasm</keyword>
<keyword id="KW-0436">Ligase</keyword>
<keyword id="KW-0547">Nucleotide-binding</keyword>
<keyword id="KW-0648">Protein biosynthesis</keyword>
<keyword id="KW-1185">Reference proteome</keyword>
<gene>
    <name evidence="1" type="primary">serS</name>
    <name type="ordered locus">TTHA0875</name>
</gene>